<feature type="chain" id="PRO_1000077318" description="Methionyl-tRNA formyltransferase">
    <location>
        <begin position="1"/>
        <end position="308"/>
    </location>
</feature>
<feature type="binding site" evidence="1">
    <location>
        <begin position="109"/>
        <end position="112"/>
    </location>
    <ligand>
        <name>(6S)-5,6,7,8-tetrahydrofolate</name>
        <dbReference type="ChEBI" id="CHEBI:57453"/>
    </ligand>
</feature>
<dbReference type="EC" id="2.1.2.9" evidence="1"/>
<dbReference type="EMBL" id="CP000667">
    <property type="protein sequence ID" value="ABP54331.1"/>
    <property type="molecule type" value="Genomic_DNA"/>
</dbReference>
<dbReference type="RefSeq" id="WP_011905761.1">
    <property type="nucleotide sequence ID" value="NC_009380.1"/>
</dbReference>
<dbReference type="SMR" id="A4X631"/>
<dbReference type="STRING" id="369723.Strop_1869"/>
<dbReference type="KEGG" id="stp:Strop_1869"/>
<dbReference type="PATRIC" id="fig|369723.5.peg.1917"/>
<dbReference type="eggNOG" id="COG0223">
    <property type="taxonomic scope" value="Bacteria"/>
</dbReference>
<dbReference type="HOGENOM" id="CLU_033347_1_1_11"/>
<dbReference type="Proteomes" id="UP000000235">
    <property type="component" value="Chromosome"/>
</dbReference>
<dbReference type="GO" id="GO:0005829">
    <property type="term" value="C:cytosol"/>
    <property type="evidence" value="ECO:0007669"/>
    <property type="project" value="TreeGrafter"/>
</dbReference>
<dbReference type="GO" id="GO:0004479">
    <property type="term" value="F:methionyl-tRNA formyltransferase activity"/>
    <property type="evidence" value="ECO:0007669"/>
    <property type="project" value="UniProtKB-UniRule"/>
</dbReference>
<dbReference type="CDD" id="cd08646">
    <property type="entry name" value="FMT_core_Met-tRNA-FMT_N"/>
    <property type="match status" value="1"/>
</dbReference>
<dbReference type="CDD" id="cd08704">
    <property type="entry name" value="Met_tRNA_FMT_C"/>
    <property type="match status" value="1"/>
</dbReference>
<dbReference type="FunFam" id="3.40.50.12230:FF:000001">
    <property type="entry name" value="Methionyl-tRNA formyltransferase"/>
    <property type="match status" value="1"/>
</dbReference>
<dbReference type="Gene3D" id="3.40.50.12230">
    <property type="match status" value="1"/>
</dbReference>
<dbReference type="HAMAP" id="MF_00182">
    <property type="entry name" value="Formyl_trans"/>
    <property type="match status" value="1"/>
</dbReference>
<dbReference type="InterPro" id="IPR005794">
    <property type="entry name" value="Fmt"/>
</dbReference>
<dbReference type="InterPro" id="IPR005793">
    <property type="entry name" value="Formyl_trans_C"/>
</dbReference>
<dbReference type="InterPro" id="IPR002376">
    <property type="entry name" value="Formyl_transf_N"/>
</dbReference>
<dbReference type="InterPro" id="IPR036477">
    <property type="entry name" value="Formyl_transf_N_sf"/>
</dbReference>
<dbReference type="InterPro" id="IPR011034">
    <property type="entry name" value="Formyl_transferase-like_C_sf"/>
</dbReference>
<dbReference type="InterPro" id="IPR044135">
    <property type="entry name" value="Met-tRNA-FMT_C"/>
</dbReference>
<dbReference type="InterPro" id="IPR041711">
    <property type="entry name" value="Met-tRNA-FMT_N"/>
</dbReference>
<dbReference type="NCBIfam" id="TIGR00460">
    <property type="entry name" value="fmt"/>
    <property type="match status" value="1"/>
</dbReference>
<dbReference type="PANTHER" id="PTHR11138">
    <property type="entry name" value="METHIONYL-TRNA FORMYLTRANSFERASE"/>
    <property type="match status" value="1"/>
</dbReference>
<dbReference type="PANTHER" id="PTHR11138:SF5">
    <property type="entry name" value="METHIONYL-TRNA FORMYLTRANSFERASE, MITOCHONDRIAL"/>
    <property type="match status" value="1"/>
</dbReference>
<dbReference type="Pfam" id="PF02911">
    <property type="entry name" value="Formyl_trans_C"/>
    <property type="match status" value="1"/>
</dbReference>
<dbReference type="Pfam" id="PF00551">
    <property type="entry name" value="Formyl_trans_N"/>
    <property type="match status" value="1"/>
</dbReference>
<dbReference type="SUPFAM" id="SSF50486">
    <property type="entry name" value="FMT C-terminal domain-like"/>
    <property type="match status" value="1"/>
</dbReference>
<dbReference type="SUPFAM" id="SSF53328">
    <property type="entry name" value="Formyltransferase"/>
    <property type="match status" value="1"/>
</dbReference>
<protein>
    <recommendedName>
        <fullName evidence="1">Methionyl-tRNA formyltransferase</fullName>
        <ecNumber evidence="1">2.1.2.9</ecNumber>
    </recommendedName>
</protein>
<accession>A4X631</accession>
<sequence length="308" mass="32341">MRVIFAGTPAVAVPTLAAVAASRHDLVAVLTRPDAPAGRGRGLSRSPVGAWADEHGIEVLTPARPREPEFLDRLRALAPDCVPVVAYGALVPPAALEIPRHGWVNLHFSLLPAWRGAAPVQHALLHGDELTGASVFQLEEGLDTGPVYGTVTDEVRPADTSGDLLERLAHSGAELLIAVLDAIEEGSARAEPQPNDGVSLAPKLTVADARVRWGDPAFAVDRRVRACSPAPGPWTTFRDERVKLGPVTLVAGGPELRPGELLVEKSRVLAGTASTPVQLGEIRAAGKKAMPASDWARGVRVTAGEVLA</sequence>
<keyword id="KW-0648">Protein biosynthesis</keyword>
<keyword id="KW-1185">Reference proteome</keyword>
<keyword id="KW-0808">Transferase</keyword>
<organism>
    <name type="scientific">Salinispora tropica (strain ATCC BAA-916 / DSM 44818 / JCM 13857 / NBRC 105044 / CNB-440)</name>
    <dbReference type="NCBI Taxonomy" id="369723"/>
    <lineage>
        <taxon>Bacteria</taxon>
        <taxon>Bacillati</taxon>
        <taxon>Actinomycetota</taxon>
        <taxon>Actinomycetes</taxon>
        <taxon>Micromonosporales</taxon>
        <taxon>Micromonosporaceae</taxon>
        <taxon>Salinispora</taxon>
    </lineage>
</organism>
<evidence type="ECO:0000255" key="1">
    <source>
        <dbReference type="HAMAP-Rule" id="MF_00182"/>
    </source>
</evidence>
<name>FMT_SALTO</name>
<comment type="function">
    <text evidence="1">Attaches a formyl group to the free amino group of methionyl-tRNA(fMet). The formyl group appears to play a dual role in the initiator identity of N-formylmethionyl-tRNA by promoting its recognition by IF2 and preventing the misappropriation of this tRNA by the elongation apparatus.</text>
</comment>
<comment type="catalytic activity">
    <reaction evidence="1">
        <text>L-methionyl-tRNA(fMet) + (6R)-10-formyltetrahydrofolate = N-formyl-L-methionyl-tRNA(fMet) + (6S)-5,6,7,8-tetrahydrofolate + H(+)</text>
        <dbReference type="Rhea" id="RHEA:24380"/>
        <dbReference type="Rhea" id="RHEA-COMP:9952"/>
        <dbReference type="Rhea" id="RHEA-COMP:9953"/>
        <dbReference type="ChEBI" id="CHEBI:15378"/>
        <dbReference type="ChEBI" id="CHEBI:57453"/>
        <dbReference type="ChEBI" id="CHEBI:78530"/>
        <dbReference type="ChEBI" id="CHEBI:78844"/>
        <dbReference type="ChEBI" id="CHEBI:195366"/>
        <dbReference type="EC" id="2.1.2.9"/>
    </reaction>
</comment>
<comment type="similarity">
    <text evidence="1">Belongs to the Fmt family.</text>
</comment>
<gene>
    <name evidence="1" type="primary">fmt</name>
    <name type="ordered locus">Strop_1869</name>
</gene>
<reference key="1">
    <citation type="journal article" date="2007" name="Proc. Natl. Acad. Sci. U.S.A.">
        <title>Genome sequencing reveals complex secondary metabolome in the marine actinomycete Salinispora tropica.</title>
        <authorList>
            <person name="Udwary D.W."/>
            <person name="Zeigler L."/>
            <person name="Asolkar R.N."/>
            <person name="Singan V."/>
            <person name="Lapidus A."/>
            <person name="Fenical W."/>
            <person name="Jensen P.R."/>
            <person name="Moore B.S."/>
        </authorList>
    </citation>
    <scope>NUCLEOTIDE SEQUENCE [LARGE SCALE GENOMIC DNA]</scope>
    <source>
        <strain>ATCC BAA-916 / DSM 44818 / JCM 13857 / NBRC 105044 / CNB-440</strain>
    </source>
</reference>
<proteinExistence type="inferred from homology"/>